<protein>
    <recommendedName>
        <fullName evidence="1">Cytochrome b6</fullName>
    </recommendedName>
</protein>
<accession>Q68RX7</accession>
<geneLocation type="chloroplast"/>
<dbReference type="EMBL" id="AY582139">
    <property type="protein sequence ID" value="AAT98538.1"/>
    <property type="molecule type" value="Genomic_DNA"/>
</dbReference>
<dbReference type="RefSeq" id="YP_086995.1">
    <property type="nucleotide sequence ID" value="NC_006290.1"/>
</dbReference>
<dbReference type="SMR" id="Q68RX7"/>
<dbReference type="GeneID" id="3021482"/>
<dbReference type="GO" id="GO:0009535">
    <property type="term" value="C:chloroplast thylakoid membrane"/>
    <property type="evidence" value="ECO:0007669"/>
    <property type="project" value="UniProtKB-SubCell"/>
</dbReference>
<dbReference type="GO" id="GO:0045158">
    <property type="term" value="F:electron transporter, transferring electrons within cytochrome b6/f complex of photosystem II activity"/>
    <property type="evidence" value="ECO:0007669"/>
    <property type="project" value="UniProtKB-UniRule"/>
</dbReference>
<dbReference type="GO" id="GO:0046872">
    <property type="term" value="F:metal ion binding"/>
    <property type="evidence" value="ECO:0007669"/>
    <property type="project" value="UniProtKB-KW"/>
</dbReference>
<dbReference type="GO" id="GO:0016491">
    <property type="term" value="F:oxidoreductase activity"/>
    <property type="evidence" value="ECO:0007669"/>
    <property type="project" value="InterPro"/>
</dbReference>
<dbReference type="GO" id="GO:0015979">
    <property type="term" value="P:photosynthesis"/>
    <property type="evidence" value="ECO:0007669"/>
    <property type="project" value="UniProtKB-UniRule"/>
</dbReference>
<dbReference type="GO" id="GO:0022904">
    <property type="term" value="P:respiratory electron transport chain"/>
    <property type="evidence" value="ECO:0007669"/>
    <property type="project" value="InterPro"/>
</dbReference>
<dbReference type="CDD" id="cd00284">
    <property type="entry name" value="Cytochrome_b_N"/>
    <property type="match status" value="1"/>
</dbReference>
<dbReference type="FunFam" id="1.20.810.10:FF:000001">
    <property type="entry name" value="Cytochrome b6"/>
    <property type="match status" value="1"/>
</dbReference>
<dbReference type="Gene3D" id="1.20.810.10">
    <property type="entry name" value="Cytochrome Bc1 Complex, Chain C"/>
    <property type="match status" value="1"/>
</dbReference>
<dbReference type="HAMAP" id="MF_00633">
    <property type="entry name" value="Cytb6_f_cytb6"/>
    <property type="match status" value="1"/>
</dbReference>
<dbReference type="InterPro" id="IPR005797">
    <property type="entry name" value="Cyt_b/b6_N"/>
</dbReference>
<dbReference type="InterPro" id="IPR023530">
    <property type="entry name" value="Cyt_B6_PetB"/>
</dbReference>
<dbReference type="InterPro" id="IPR027387">
    <property type="entry name" value="Cytb/b6-like_sf"/>
</dbReference>
<dbReference type="InterPro" id="IPR048259">
    <property type="entry name" value="Cytochrome_b_N_euk/bac"/>
</dbReference>
<dbReference type="InterPro" id="IPR016174">
    <property type="entry name" value="Di-haem_cyt_TM"/>
</dbReference>
<dbReference type="NCBIfam" id="NF002990">
    <property type="entry name" value="PRK03735.1"/>
    <property type="match status" value="1"/>
</dbReference>
<dbReference type="PANTHER" id="PTHR19271">
    <property type="entry name" value="CYTOCHROME B"/>
    <property type="match status" value="1"/>
</dbReference>
<dbReference type="PANTHER" id="PTHR19271:SF16">
    <property type="entry name" value="CYTOCHROME B"/>
    <property type="match status" value="1"/>
</dbReference>
<dbReference type="Pfam" id="PF00033">
    <property type="entry name" value="Cytochrome_B"/>
    <property type="match status" value="1"/>
</dbReference>
<dbReference type="PIRSF" id="PIRSF000032">
    <property type="entry name" value="Cytochrome_b6"/>
    <property type="match status" value="1"/>
</dbReference>
<dbReference type="SUPFAM" id="SSF81342">
    <property type="entry name" value="Transmembrane di-heme cytochromes"/>
    <property type="match status" value="1"/>
</dbReference>
<dbReference type="PROSITE" id="PS51002">
    <property type="entry name" value="CYTB_NTER"/>
    <property type="match status" value="1"/>
</dbReference>
<name>CYB6_PANGI</name>
<comment type="function">
    <text evidence="1">Component of the cytochrome b6-f complex, which mediates electron transfer between photosystem II (PSII) and photosystem I (PSI), cyclic electron flow around PSI, and state transitions.</text>
</comment>
<comment type="cofactor">
    <cofactor evidence="1">
        <name>heme b</name>
        <dbReference type="ChEBI" id="CHEBI:60344"/>
    </cofactor>
    <text evidence="1">Binds 2 heme b groups non-covalently with two histidine residues as axial ligands.</text>
</comment>
<comment type="cofactor">
    <cofactor evidence="1">
        <name>heme c</name>
        <dbReference type="ChEBI" id="CHEBI:61717"/>
    </cofactor>
    <text evidence="1">Binds one heme group covalently by a single cysteine link with no axial amino acid ligand. This heme was named heme ci.</text>
</comment>
<comment type="subunit">
    <text evidence="1">The 4 large subunits of the cytochrome b6-f complex are cytochrome b6, subunit IV (17 kDa polypeptide, PetD), cytochrome f and the Rieske protein, while the 4 small subunits are PetG, PetL, PetM and PetN. The complex functions as a dimer.</text>
</comment>
<comment type="subcellular location">
    <subcellularLocation>
        <location evidence="1">Plastid</location>
        <location evidence="1">Chloroplast thylakoid membrane</location>
        <topology evidence="1">Multi-pass membrane protein</topology>
    </subcellularLocation>
</comment>
<comment type="miscellaneous">
    <text evidence="1">Heme 1 (or BH or b566) is high-potential and absorbs at about 566 nm, and heme 2 (or BL or b562) is low-potential and absorbs at about 562 nm.</text>
</comment>
<comment type="similarity">
    <text evidence="1">Belongs to the cytochrome b family. PetB subfamily.</text>
</comment>
<reference key="1">
    <citation type="journal article" date="2004" name="DNA Res.">
        <title>Complete chloroplast genome sequence from Korea ginseng (Panax schinseng Nees) and comparative analysis of sequence evolution among 17 vascular plants.</title>
        <authorList>
            <person name="Kim K.-J."/>
            <person name="Lee H.-L."/>
        </authorList>
    </citation>
    <scope>NUCLEOTIDE SEQUENCE [LARGE SCALE GENOMIC DNA]</scope>
</reference>
<evidence type="ECO:0000255" key="1">
    <source>
        <dbReference type="HAMAP-Rule" id="MF_00633"/>
    </source>
</evidence>
<gene>
    <name evidence="1" type="primary">petB</name>
    <name type="ORF">PSC0768</name>
</gene>
<organism>
    <name type="scientific">Panax ginseng</name>
    <name type="common">Korean ginseng</name>
    <dbReference type="NCBI Taxonomy" id="4054"/>
    <lineage>
        <taxon>Eukaryota</taxon>
        <taxon>Viridiplantae</taxon>
        <taxon>Streptophyta</taxon>
        <taxon>Embryophyta</taxon>
        <taxon>Tracheophyta</taxon>
        <taxon>Spermatophyta</taxon>
        <taxon>Magnoliopsida</taxon>
        <taxon>eudicotyledons</taxon>
        <taxon>Gunneridae</taxon>
        <taxon>Pentapetalae</taxon>
        <taxon>asterids</taxon>
        <taxon>campanulids</taxon>
        <taxon>Apiales</taxon>
        <taxon>Araliaceae</taxon>
        <taxon>Panax</taxon>
    </lineage>
</organism>
<feature type="chain" id="PRO_0000061810" description="Cytochrome b6">
    <location>
        <begin position="1"/>
        <end position="215"/>
    </location>
</feature>
<feature type="transmembrane region" description="Helical" evidence="1">
    <location>
        <begin position="32"/>
        <end position="52"/>
    </location>
</feature>
<feature type="transmembrane region" description="Helical" evidence="1">
    <location>
        <begin position="90"/>
        <end position="110"/>
    </location>
</feature>
<feature type="transmembrane region" description="Helical" evidence="1">
    <location>
        <begin position="116"/>
        <end position="136"/>
    </location>
</feature>
<feature type="transmembrane region" description="Helical" evidence="1">
    <location>
        <begin position="186"/>
        <end position="206"/>
    </location>
</feature>
<feature type="binding site" description="covalent" evidence="1">
    <location>
        <position position="35"/>
    </location>
    <ligand>
        <name>heme c</name>
        <dbReference type="ChEBI" id="CHEBI:61717"/>
    </ligand>
</feature>
<feature type="binding site" description="axial binding residue" evidence="1">
    <location>
        <position position="86"/>
    </location>
    <ligand>
        <name>heme b</name>
        <dbReference type="ChEBI" id="CHEBI:60344"/>
        <label>2</label>
    </ligand>
    <ligandPart>
        <name>Fe</name>
        <dbReference type="ChEBI" id="CHEBI:18248"/>
    </ligandPart>
</feature>
<feature type="binding site" description="axial binding residue" evidence="1">
    <location>
        <position position="100"/>
    </location>
    <ligand>
        <name>heme b</name>
        <dbReference type="ChEBI" id="CHEBI:60344"/>
        <label>1</label>
    </ligand>
    <ligandPart>
        <name>Fe</name>
        <dbReference type="ChEBI" id="CHEBI:18248"/>
    </ligandPart>
</feature>
<feature type="binding site" description="axial binding residue" evidence="1">
    <location>
        <position position="187"/>
    </location>
    <ligand>
        <name>heme b</name>
        <dbReference type="ChEBI" id="CHEBI:60344"/>
        <label>2</label>
    </ligand>
    <ligandPart>
        <name>Fe</name>
        <dbReference type="ChEBI" id="CHEBI:18248"/>
    </ligandPart>
</feature>
<feature type="binding site" description="axial binding residue" evidence="1">
    <location>
        <position position="202"/>
    </location>
    <ligand>
        <name>heme b</name>
        <dbReference type="ChEBI" id="CHEBI:60344"/>
        <label>1</label>
    </ligand>
    <ligandPart>
        <name>Fe</name>
        <dbReference type="ChEBI" id="CHEBI:18248"/>
    </ligandPart>
</feature>
<sequence length="215" mass="24121">MSKVYDWFEERLEIQAIADDITSKYVPPHVNIFYCLGGITLTCFLVQVATGFAMTFYYRPTVTDAFASVQYIMTEANFGWLIRSVHRWSASMMVLMMILHVFRVYLTGGFKKPRELTWVTGVVLAVLTASFGVTGYSLPRDQIGYWAVKIVTGVPEAIPVIGSPLVELLRGSASVGQSTLTRFYSLHTFVLPLLTAVFMLMHFPMIRKQGISGPL</sequence>
<proteinExistence type="inferred from homology"/>
<keyword id="KW-0150">Chloroplast</keyword>
<keyword id="KW-0249">Electron transport</keyword>
<keyword id="KW-0349">Heme</keyword>
<keyword id="KW-0408">Iron</keyword>
<keyword id="KW-0472">Membrane</keyword>
<keyword id="KW-0479">Metal-binding</keyword>
<keyword id="KW-0602">Photosynthesis</keyword>
<keyword id="KW-0934">Plastid</keyword>
<keyword id="KW-0793">Thylakoid</keyword>
<keyword id="KW-0812">Transmembrane</keyword>
<keyword id="KW-1133">Transmembrane helix</keyword>
<keyword id="KW-0813">Transport</keyword>